<gene>
    <name type="ORF">ZK688.7</name>
</gene>
<proteinExistence type="predicted"/>
<organism>
    <name type="scientific">Caenorhabditis elegans</name>
    <dbReference type="NCBI Taxonomy" id="6239"/>
    <lineage>
        <taxon>Eukaryota</taxon>
        <taxon>Metazoa</taxon>
        <taxon>Ecdysozoa</taxon>
        <taxon>Nematoda</taxon>
        <taxon>Chromadorea</taxon>
        <taxon>Rhabditida</taxon>
        <taxon>Rhabditina</taxon>
        <taxon>Rhabditomorpha</taxon>
        <taxon>Rhabditoidea</taxon>
        <taxon>Rhabditidae</taxon>
        <taxon>Peloderinae</taxon>
        <taxon>Caenorhabditis</taxon>
    </lineage>
</organism>
<keyword id="KW-1185">Reference proteome</keyword>
<dbReference type="EMBL" id="FO080277">
    <property type="protein sequence ID" value="CCD62540.1"/>
    <property type="molecule type" value="Genomic_DNA"/>
</dbReference>
<dbReference type="PIR" id="S44914">
    <property type="entry name" value="S44914"/>
</dbReference>
<dbReference type="RefSeq" id="NP_498721.2">
    <property type="nucleotide sequence ID" value="NM_066320.5"/>
</dbReference>
<dbReference type="FunCoup" id="P34677">
    <property type="interactions" value="1551"/>
</dbReference>
<dbReference type="PaxDb" id="6239-ZK688.7"/>
<dbReference type="EnsemblMetazoa" id="ZK688.7.1">
    <property type="protein sequence ID" value="ZK688.7.1"/>
    <property type="gene ID" value="WBGene00022802"/>
</dbReference>
<dbReference type="GeneID" id="191407"/>
<dbReference type="KEGG" id="cel:CELE_ZK688.7"/>
<dbReference type="UCSC" id="ZK688.7">
    <property type="organism name" value="c. elegans"/>
</dbReference>
<dbReference type="AGR" id="WB:WBGene00022802"/>
<dbReference type="CTD" id="191407"/>
<dbReference type="WormBase" id="ZK688.7">
    <property type="protein sequence ID" value="CE40005"/>
    <property type="gene ID" value="WBGene00022802"/>
</dbReference>
<dbReference type="eggNOG" id="ENOG502R8Y5">
    <property type="taxonomic scope" value="Eukaryota"/>
</dbReference>
<dbReference type="GeneTree" id="ENSGT00970000196419"/>
<dbReference type="HOGENOM" id="CLU_1779100_0_0_1"/>
<dbReference type="InParanoid" id="P34677"/>
<dbReference type="OMA" id="TAAGWAW"/>
<dbReference type="OrthoDB" id="7458077at2759"/>
<dbReference type="PRO" id="PR:P34677"/>
<dbReference type="Proteomes" id="UP000001940">
    <property type="component" value="Chromosome III"/>
</dbReference>
<dbReference type="Bgee" id="WBGene00022802">
    <property type="expression patterns" value="Expressed in embryo and 3 other cell types or tissues"/>
</dbReference>
<dbReference type="PANTHER" id="PTHR21525">
    <property type="entry name" value="MOTILE SPERM PROTEIN"/>
    <property type="match status" value="1"/>
</dbReference>
<dbReference type="PANTHER" id="PTHR21525:SF2">
    <property type="entry name" value="PROTEIN CBG12274"/>
    <property type="match status" value="1"/>
</dbReference>
<name>YO27_CAEEL</name>
<sequence>MTSSDVIPASTTSSSGWIASVGSAAGWVWDGMKVTGSVFNDYGTSTTRNTVCTTATVAGGFLGGWSGGAIGSAVGTLILPGIGTAVGSFLGGASAALVAGKATIVVTDRVLDTISYDIETVSCEKCGRGFRCKLYKEGRDKLCYRCK</sequence>
<accession>P34677</accession>
<accession>Q27GV4</accession>
<reference key="1">
    <citation type="journal article" date="1994" name="Nature">
        <title>2.2 Mb of contiguous nucleotide sequence from chromosome III of C. elegans.</title>
        <authorList>
            <person name="Wilson R."/>
            <person name="Ainscough R."/>
            <person name="Anderson K."/>
            <person name="Baynes C."/>
            <person name="Berks M."/>
            <person name="Bonfield J."/>
            <person name="Burton J."/>
            <person name="Connell M."/>
            <person name="Copsey T."/>
            <person name="Cooper J."/>
            <person name="Coulson A."/>
            <person name="Craxton M."/>
            <person name="Dear S."/>
            <person name="Du Z."/>
            <person name="Durbin R."/>
            <person name="Favello A."/>
            <person name="Fraser A."/>
            <person name="Fulton L."/>
            <person name="Gardner A."/>
            <person name="Green P."/>
            <person name="Hawkins T."/>
            <person name="Hillier L."/>
            <person name="Jier M."/>
            <person name="Johnston L."/>
            <person name="Jones M."/>
            <person name="Kershaw J."/>
            <person name="Kirsten J."/>
            <person name="Laisster N."/>
            <person name="Latreille P."/>
            <person name="Lightning J."/>
            <person name="Lloyd C."/>
            <person name="Mortimore B."/>
            <person name="O'Callaghan M."/>
            <person name="Parsons J."/>
            <person name="Percy C."/>
            <person name="Rifken L."/>
            <person name="Roopra A."/>
            <person name="Saunders D."/>
            <person name="Shownkeen R."/>
            <person name="Sims M."/>
            <person name="Smaldon N."/>
            <person name="Smith A."/>
            <person name="Smith M."/>
            <person name="Sonnhammer E."/>
            <person name="Staden R."/>
            <person name="Sulston J."/>
            <person name="Thierry-Mieg J."/>
            <person name="Thomas K."/>
            <person name="Vaudin M."/>
            <person name="Vaughan K."/>
            <person name="Waterston R."/>
            <person name="Watson A."/>
            <person name="Weinstock L."/>
            <person name="Wilkinson-Sproat J."/>
            <person name="Wohldman P."/>
        </authorList>
    </citation>
    <scope>NUCLEOTIDE SEQUENCE [LARGE SCALE GENOMIC DNA]</scope>
    <source>
        <strain>Bristol N2</strain>
    </source>
</reference>
<reference key="2">
    <citation type="journal article" date="1998" name="Science">
        <title>Genome sequence of the nematode C. elegans: a platform for investigating biology.</title>
        <authorList>
            <consortium name="The C. elegans sequencing consortium"/>
        </authorList>
    </citation>
    <scope>NUCLEOTIDE SEQUENCE [LARGE SCALE GENOMIC DNA]</scope>
    <source>
        <strain>Bristol N2</strain>
    </source>
</reference>
<protein>
    <recommendedName>
        <fullName>Uncharacterized protein ZK688.7</fullName>
    </recommendedName>
</protein>
<feature type="chain" id="PRO_0000213479" description="Uncharacterized protein ZK688.7">
    <location>
        <begin position="1"/>
        <end position="147"/>
    </location>
</feature>